<feature type="chain" id="PRO_0000092073" description="Putative ABC transporter ATP-binding protein SAR2766">
    <location>
        <begin position="1"/>
        <end position="570"/>
    </location>
</feature>
<feature type="domain" description="ABC transporter 1" evidence="2">
    <location>
        <begin position="6"/>
        <end position="247"/>
    </location>
</feature>
<feature type="domain" description="ABC transporter 2" evidence="2">
    <location>
        <begin position="304"/>
        <end position="537"/>
    </location>
</feature>
<feature type="binding site" evidence="2">
    <location>
        <begin position="40"/>
        <end position="47"/>
    </location>
    <ligand>
        <name>ATP</name>
        <dbReference type="ChEBI" id="CHEBI:30616"/>
        <label>1</label>
    </ligand>
</feature>
<feature type="binding site" evidence="2">
    <location>
        <begin position="338"/>
        <end position="345"/>
    </location>
    <ligand>
        <name>ATP</name>
        <dbReference type="ChEBI" id="CHEBI:30616"/>
        <label>2</label>
    </ligand>
</feature>
<accession>Q6GDC0</accession>
<dbReference type="EC" id="7.-.-.-"/>
<dbReference type="EMBL" id="BX571856">
    <property type="protein sequence ID" value="CAG41741.1"/>
    <property type="molecule type" value="Genomic_DNA"/>
</dbReference>
<dbReference type="RefSeq" id="WP_000138663.1">
    <property type="nucleotide sequence ID" value="NC_002952.2"/>
</dbReference>
<dbReference type="SMR" id="Q6GDC0"/>
<dbReference type="KEGG" id="sar:SAR2766"/>
<dbReference type="HOGENOM" id="CLU_000604_86_7_9"/>
<dbReference type="Proteomes" id="UP000000596">
    <property type="component" value="Chromosome"/>
</dbReference>
<dbReference type="GO" id="GO:0043190">
    <property type="term" value="C:ATP-binding cassette (ABC) transporter complex"/>
    <property type="evidence" value="ECO:0007669"/>
    <property type="project" value="TreeGrafter"/>
</dbReference>
<dbReference type="GO" id="GO:0005524">
    <property type="term" value="F:ATP binding"/>
    <property type="evidence" value="ECO:0007669"/>
    <property type="project" value="UniProtKB-KW"/>
</dbReference>
<dbReference type="GO" id="GO:0016887">
    <property type="term" value="F:ATP hydrolysis activity"/>
    <property type="evidence" value="ECO:0007669"/>
    <property type="project" value="InterPro"/>
</dbReference>
<dbReference type="GO" id="GO:0042626">
    <property type="term" value="F:ATPase-coupled transmembrane transporter activity"/>
    <property type="evidence" value="ECO:0007669"/>
    <property type="project" value="TreeGrafter"/>
</dbReference>
<dbReference type="CDD" id="cd03225">
    <property type="entry name" value="ABC_cobalt_CbiO_domain1"/>
    <property type="match status" value="2"/>
</dbReference>
<dbReference type="FunFam" id="3.40.50.300:FF:001422">
    <property type="entry name" value="Cobalt ABC transporter ATP-binding protein"/>
    <property type="match status" value="1"/>
</dbReference>
<dbReference type="FunFam" id="3.40.50.300:FF:000224">
    <property type="entry name" value="Energy-coupling factor transporter ATP-binding protein EcfA"/>
    <property type="match status" value="1"/>
</dbReference>
<dbReference type="Gene3D" id="3.40.50.300">
    <property type="entry name" value="P-loop containing nucleotide triphosphate hydrolases"/>
    <property type="match status" value="2"/>
</dbReference>
<dbReference type="InterPro" id="IPR003593">
    <property type="entry name" value="AAA+_ATPase"/>
</dbReference>
<dbReference type="InterPro" id="IPR022216">
    <property type="entry name" value="ABC_Co_transporter"/>
</dbReference>
<dbReference type="InterPro" id="IPR003439">
    <property type="entry name" value="ABC_transporter-like_ATP-bd"/>
</dbReference>
<dbReference type="InterPro" id="IPR017871">
    <property type="entry name" value="ABC_transporter-like_CS"/>
</dbReference>
<dbReference type="InterPro" id="IPR015856">
    <property type="entry name" value="ABC_transpr_CbiO/EcfA_su"/>
</dbReference>
<dbReference type="InterPro" id="IPR050095">
    <property type="entry name" value="ECF_ABC_transporter_ATP-bd"/>
</dbReference>
<dbReference type="InterPro" id="IPR027417">
    <property type="entry name" value="P-loop_NTPase"/>
</dbReference>
<dbReference type="NCBIfam" id="NF010167">
    <property type="entry name" value="PRK13648.1"/>
    <property type="match status" value="2"/>
</dbReference>
<dbReference type="PANTHER" id="PTHR43553:SF26">
    <property type="entry name" value="ABC TRANSPORTER ATP-BINDING PROTEIN BC_2655-RELATED"/>
    <property type="match status" value="1"/>
</dbReference>
<dbReference type="PANTHER" id="PTHR43553">
    <property type="entry name" value="HEAVY METAL TRANSPORTER"/>
    <property type="match status" value="1"/>
</dbReference>
<dbReference type="Pfam" id="PF00005">
    <property type="entry name" value="ABC_tran"/>
    <property type="match status" value="2"/>
</dbReference>
<dbReference type="Pfam" id="PF12558">
    <property type="entry name" value="DUF3744"/>
    <property type="match status" value="1"/>
</dbReference>
<dbReference type="SMART" id="SM00382">
    <property type="entry name" value="AAA"/>
    <property type="match status" value="2"/>
</dbReference>
<dbReference type="SUPFAM" id="SSF52540">
    <property type="entry name" value="P-loop containing nucleoside triphosphate hydrolases"/>
    <property type="match status" value="2"/>
</dbReference>
<dbReference type="PROSITE" id="PS00211">
    <property type="entry name" value="ABC_TRANSPORTER_1"/>
    <property type="match status" value="2"/>
</dbReference>
<dbReference type="PROSITE" id="PS50893">
    <property type="entry name" value="ABC_TRANSPORTER_2"/>
    <property type="match status" value="2"/>
</dbReference>
<evidence type="ECO:0000250" key="1"/>
<evidence type="ECO:0000255" key="2">
    <source>
        <dbReference type="PROSITE-ProRule" id="PRU00434"/>
    </source>
</evidence>
<evidence type="ECO:0000305" key="3"/>
<protein>
    <recommendedName>
        <fullName>Putative ABC transporter ATP-binding protein SAR2766</fullName>
        <ecNumber>7.-.-.-</ecNumber>
    </recommendedName>
</protein>
<comment type="function">
    <text evidence="1">Probably part of an ABC transporter complex. Responsible for energy coupling to the transport system (By similarity).</text>
</comment>
<comment type="subcellular location">
    <subcellularLocation>
        <location evidence="1">Cell membrane</location>
        <topology evidence="1">Peripheral membrane protein</topology>
    </subcellularLocation>
</comment>
<comment type="similarity">
    <text evidence="3">Belongs to the ABC transporter superfamily.</text>
</comment>
<sequence length="570" mass="64206">MTEPIISFKDFSFQYHSQATPTLQNINVDIYPGEKVLVVGASGSGKSTFANCINGLIPFKTKGNVTGELHINNQDATVSCLHKRSNVVGTVLQDTDGQFIGLTAAEDMAFLLENNCVEQDDMKKNVSYWAEKVDMIEHLNHRPQDLSGGQKQRVSLGGILIHRTPILILDEPLANLDPATGHETLRLLNNIHEETKSTMIIVEHRLEESLDDTFDRVLLFKDGKIIANTTPSDLLKSSKLKEAGIREPLYCTALKYAEVDVESIDNLANLREVCMSEHVKFKVKKWIDKTSSNDDNKYKSEPLLELNEVCVQYSDYSNSVLNNVQLNVYRREMLSIVGHNGAGKSTLAKAICGFLDITGNIQFCNKGFNQLSISERSEFIGYVMQNPNHMISEKMIYDEVALGLRARGMKESDIKIRVENVLKICGLYAFRNWPIAALSYGQKKRVTIASVLVLNPEIIILDEPTAGQDFYHYNEIMSFLIELNRQGKTIIMITHDMHLLSEYSSRTVVLSKGQVVADTTPVLVLNDKKICEIASLRQTSLFEMAEYIGISEPQKLIQLFINHDRKVRRQ</sequence>
<gene>
    <name type="ordered locus">SAR2766</name>
</gene>
<name>Y2766_STAAR</name>
<proteinExistence type="inferred from homology"/>
<reference key="1">
    <citation type="journal article" date="2004" name="Proc. Natl. Acad. Sci. U.S.A.">
        <title>Complete genomes of two clinical Staphylococcus aureus strains: evidence for the rapid evolution of virulence and drug resistance.</title>
        <authorList>
            <person name="Holden M.T.G."/>
            <person name="Feil E.J."/>
            <person name="Lindsay J.A."/>
            <person name="Peacock S.J."/>
            <person name="Day N.P.J."/>
            <person name="Enright M.C."/>
            <person name="Foster T.J."/>
            <person name="Moore C.E."/>
            <person name="Hurst L."/>
            <person name="Atkin R."/>
            <person name="Barron A."/>
            <person name="Bason N."/>
            <person name="Bentley S.D."/>
            <person name="Chillingworth C."/>
            <person name="Chillingworth T."/>
            <person name="Churcher C."/>
            <person name="Clark L."/>
            <person name="Corton C."/>
            <person name="Cronin A."/>
            <person name="Doggett J."/>
            <person name="Dowd L."/>
            <person name="Feltwell T."/>
            <person name="Hance Z."/>
            <person name="Harris B."/>
            <person name="Hauser H."/>
            <person name="Holroyd S."/>
            <person name="Jagels K."/>
            <person name="James K.D."/>
            <person name="Lennard N."/>
            <person name="Line A."/>
            <person name="Mayes R."/>
            <person name="Moule S."/>
            <person name="Mungall K."/>
            <person name="Ormond D."/>
            <person name="Quail M.A."/>
            <person name="Rabbinowitsch E."/>
            <person name="Rutherford K.M."/>
            <person name="Sanders M."/>
            <person name="Sharp S."/>
            <person name="Simmonds M."/>
            <person name="Stevens K."/>
            <person name="Whitehead S."/>
            <person name="Barrell B.G."/>
            <person name="Spratt B.G."/>
            <person name="Parkhill J."/>
        </authorList>
    </citation>
    <scope>NUCLEOTIDE SEQUENCE [LARGE SCALE GENOMIC DNA]</scope>
    <source>
        <strain>MRSA252</strain>
    </source>
</reference>
<organism>
    <name type="scientific">Staphylococcus aureus (strain MRSA252)</name>
    <dbReference type="NCBI Taxonomy" id="282458"/>
    <lineage>
        <taxon>Bacteria</taxon>
        <taxon>Bacillati</taxon>
        <taxon>Bacillota</taxon>
        <taxon>Bacilli</taxon>
        <taxon>Bacillales</taxon>
        <taxon>Staphylococcaceae</taxon>
        <taxon>Staphylococcus</taxon>
    </lineage>
</organism>
<keyword id="KW-0067">ATP-binding</keyword>
<keyword id="KW-1003">Cell membrane</keyword>
<keyword id="KW-0472">Membrane</keyword>
<keyword id="KW-0547">Nucleotide-binding</keyword>
<keyword id="KW-0677">Repeat</keyword>
<keyword id="KW-1278">Translocase</keyword>
<keyword id="KW-0813">Transport</keyword>